<dbReference type="EMBL" id="CR858241">
    <property type="protein sequence ID" value="CAH90478.1"/>
    <property type="molecule type" value="mRNA"/>
</dbReference>
<dbReference type="RefSeq" id="NP_001124550.1">
    <property type="nucleotide sequence ID" value="NM_001131078.1"/>
</dbReference>
<dbReference type="SMR" id="Q5RCM9"/>
<dbReference type="FunCoup" id="Q5RCM9">
    <property type="interactions" value="2730"/>
</dbReference>
<dbReference type="STRING" id="9601.ENSPPYP00000020238"/>
<dbReference type="GlyCosmos" id="Q5RCM9">
    <property type="glycosylation" value="3 sites, No reported glycans"/>
</dbReference>
<dbReference type="GeneID" id="100127093"/>
<dbReference type="KEGG" id="pon:100127093"/>
<dbReference type="CTD" id="64764"/>
<dbReference type="eggNOG" id="KOG0709">
    <property type="taxonomic scope" value="Eukaryota"/>
</dbReference>
<dbReference type="InParanoid" id="Q5RCM9"/>
<dbReference type="OrthoDB" id="674948at2759"/>
<dbReference type="Proteomes" id="UP000001595">
    <property type="component" value="Unplaced"/>
</dbReference>
<dbReference type="GO" id="GO:0005783">
    <property type="term" value="C:endoplasmic reticulum"/>
    <property type="evidence" value="ECO:0000250"/>
    <property type="project" value="UniProtKB"/>
</dbReference>
<dbReference type="GO" id="GO:0005789">
    <property type="term" value="C:endoplasmic reticulum membrane"/>
    <property type="evidence" value="ECO:0007669"/>
    <property type="project" value="UniProtKB-SubCell"/>
</dbReference>
<dbReference type="GO" id="GO:0005634">
    <property type="term" value="C:nucleus"/>
    <property type="evidence" value="ECO:0000250"/>
    <property type="project" value="UniProtKB"/>
</dbReference>
<dbReference type="GO" id="GO:0035497">
    <property type="term" value="F:cAMP response element binding"/>
    <property type="evidence" value="ECO:0007669"/>
    <property type="project" value="TreeGrafter"/>
</dbReference>
<dbReference type="GO" id="GO:0000981">
    <property type="term" value="F:DNA-binding transcription factor activity, RNA polymerase II-specific"/>
    <property type="evidence" value="ECO:0007669"/>
    <property type="project" value="TreeGrafter"/>
</dbReference>
<dbReference type="GO" id="GO:0000976">
    <property type="term" value="F:transcription cis-regulatory region binding"/>
    <property type="evidence" value="ECO:0000250"/>
    <property type="project" value="UniProtKB"/>
</dbReference>
<dbReference type="GO" id="GO:0051216">
    <property type="term" value="P:cartilage development"/>
    <property type="evidence" value="ECO:0000250"/>
    <property type="project" value="UniProtKB"/>
</dbReference>
<dbReference type="GO" id="GO:0002062">
    <property type="term" value="P:chondrocyte differentiation"/>
    <property type="evidence" value="ECO:0000250"/>
    <property type="project" value="UniProtKB"/>
</dbReference>
<dbReference type="GO" id="GO:0034976">
    <property type="term" value="P:response to endoplasmic reticulum stress"/>
    <property type="evidence" value="ECO:0000250"/>
    <property type="project" value="UniProtKB"/>
</dbReference>
<dbReference type="GO" id="GO:0006986">
    <property type="term" value="P:response to unfolded protein"/>
    <property type="evidence" value="ECO:0007669"/>
    <property type="project" value="UniProtKB-KW"/>
</dbReference>
<dbReference type="CDD" id="cd14689">
    <property type="entry name" value="bZIP_CREB3"/>
    <property type="match status" value="1"/>
</dbReference>
<dbReference type="FunFam" id="1.20.5.170:FF:000054">
    <property type="entry name" value="Cyclic AMP-responsive element-binding protein 3-like 2"/>
    <property type="match status" value="1"/>
</dbReference>
<dbReference type="Gene3D" id="1.20.5.170">
    <property type="match status" value="1"/>
</dbReference>
<dbReference type="InterPro" id="IPR004827">
    <property type="entry name" value="bZIP"/>
</dbReference>
<dbReference type="InterPro" id="IPR046347">
    <property type="entry name" value="bZIP_sf"/>
</dbReference>
<dbReference type="PANTHER" id="PTHR46004">
    <property type="entry name" value="CYCLIC AMP RESPONSE ELEMENT-BINDING PROTEIN A"/>
    <property type="match status" value="1"/>
</dbReference>
<dbReference type="PANTHER" id="PTHR46004:SF2">
    <property type="entry name" value="CYCLIC AMP-RESPONSIVE ELEMENT-BINDING PROTEIN 3-LIKE PROTEIN 2"/>
    <property type="match status" value="1"/>
</dbReference>
<dbReference type="Pfam" id="PF00170">
    <property type="entry name" value="bZIP_1"/>
    <property type="match status" value="1"/>
</dbReference>
<dbReference type="SMART" id="SM00338">
    <property type="entry name" value="BRLZ"/>
    <property type="match status" value="1"/>
</dbReference>
<dbReference type="SUPFAM" id="SSF57959">
    <property type="entry name" value="Leucine zipper domain"/>
    <property type="match status" value="1"/>
</dbReference>
<dbReference type="PROSITE" id="PS50217">
    <property type="entry name" value="BZIP"/>
    <property type="match status" value="1"/>
</dbReference>
<dbReference type="PROSITE" id="PS00036">
    <property type="entry name" value="BZIP_BASIC"/>
    <property type="match status" value="1"/>
</dbReference>
<organism>
    <name type="scientific">Pongo abelii</name>
    <name type="common">Sumatran orangutan</name>
    <name type="synonym">Pongo pygmaeus abelii</name>
    <dbReference type="NCBI Taxonomy" id="9601"/>
    <lineage>
        <taxon>Eukaryota</taxon>
        <taxon>Metazoa</taxon>
        <taxon>Chordata</taxon>
        <taxon>Craniata</taxon>
        <taxon>Vertebrata</taxon>
        <taxon>Euteleostomi</taxon>
        <taxon>Mammalia</taxon>
        <taxon>Eutheria</taxon>
        <taxon>Euarchontoglires</taxon>
        <taxon>Primates</taxon>
        <taxon>Haplorrhini</taxon>
        <taxon>Catarrhini</taxon>
        <taxon>Hominidae</taxon>
        <taxon>Pongo</taxon>
    </lineage>
</organism>
<feature type="chain" id="PRO_0000288069" description="Cyclic AMP-responsive element-binding protein 3-like protein 2">
    <location>
        <begin position="1"/>
        <end position="520"/>
    </location>
</feature>
<feature type="chain" id="PRO_0000296211" description="Processed cyclic AMP-responsive element-binding protein 3-like protein 2">
    <location>
        <begin position="1"/>
        <end status="unknown"/>
    </location>
</feature>
<feature type="topological domain" description="Cytoplasmic" evidence="4">
    <location>
        <begin position="1"/>
        <end position="378"/>
    </location>
</feature>
<feature type="transmembrane region" description="Helical; Signal-anchor for type II membrane protein" evidence="4">
    <location>
        <begin position="379"/>
        <end position="399"/>
    </location>
</feature>
<feature type="topological domain" description="Lumenal" evidence="4">
    <location>
        <begin position="400"/>
        <end position="520"/>
    </location>
</feature>
<feature type="domain" description="bZIP" evidence="5">
    <location>
        <begin position="294"/>
        <end position="357"/>
    </location>
</feature>
<feature type="region of interest" description="Disordered" evidence="6">
    <location>
        <begin position="195"/>
        <end position="264"/>
    </location>
</feature>
<feature type="region of interest" description="Basic motif" evidence="5">
    <location>
        <begin position="296"/>
        <end position="325"/>
    </location>
</feature>
<feature type="region of interest" description="Leucine-zipper" evidence="5">
    <location>
        <begin position="336"/>
        <end position="357"/>
    </location>
</feature>
<feature type="short sequence motif" description="S1P recognition" evidence="2">
    <location>
        <begin position="427"/>
        <end position="430"/>
    </location>
</feature>
<feature type="compositionally biased region" description="Low complexity" evidence="6">
    <location>
        <begin position="208"/>
        <end position="220"/>
    </location>
</feature>
<feature type="compositionally biased region" description="Low complexity" evidence="6">
    <location>
        <begin position="234"/>
        <end position="255"/>
    </location>
</feature>
<feature type="modified residue" description="Phosphoserine" evidence="2">
    <location>
        <position position="93"/>
    </location>
</feature>
<feature type="modified residue" description="Phosphoserine" evidence="2">
    <location>
        <position position="191"/>
    </location>
</feature>
<feature type="glycosylation site" description="N-linked (GlcNAc...) asparagine" evidence="4">
    <location>
        <position position="480"/>
    </location>
</feature>
<feature type="glycosylation site" description="N-linked (GlcNAc...) asparagine" evidence="4">
    <location>
        <position position="504"/>
    </location>
</feature>
<feature type="glycosylation site" description="N-linked (GlcNAc...) asparagine" evidence="4">
    <location>
        <position position="517"/>
    </location>
</feature>
<feature type="cross-link" description="Glycyl lysine isopeptide (Lys-Gly) (interchain with G-Cter in SUMO2)" evidence="2">
    <location>
        <position position="178"/>
    </location>
</feature>
<comment type="function">
    <text evidence="3">Transcription factor involved in unfolded protein response (UPR). In the absence of endoplasmic reticulum (ER) stress, inserted into ER membranes, with N-terminal DNA-binding and transcription activation domains oriented toward the cytosolic face of the membrane. In response to ER stress, transported to the Golgi, where it is cleaved in a site-specific manner by resident proteases S1P/MBTPS1 and S2P/MBTPS2. The released N-terminal cytosolic domain is translocated to the nucleus to effect transcription of specific target genes. Plays a critical role in chondrogenesis by activating the transcription of SEC23A, which promotes the transport and secretion of cartilage matrix proteins, and possibly that of ER biogenesis-related genes (By similarity). In a neuroblastoma cell line, protects cells from ER stress-induced death. In vitro activates transcription of target genes via direct binding to the CRE site (By similarity).</text>
</comment>
<comment type="subunit">
    <text evidence="1">Binds DNA as a dimer.</text>
</comment>
<comment type="subcellular location">
    <subcellularLocation>
        <location evidence="3">Endoplasmic reticulum membrane</location>
        <topology evidence="2">Single-pass type II membrane protein</topology>
    </subcellularLocation>
    <text evidence="3">ER membrane resident protein. Upon ER stress, translocated to the Golgi apparatus where it is cleaved. The cytosolic N-terminal fragment (processed cyclic AMP-responsive element-binding protein 3-like protein 1) is transported into the nucleus.</text>
</comment>
<comment type="subcellular location">
    <molecule>Processed cyclic AMP-responsive element-binding protein 3-like protein 2</molecule>
    <subcellularLocation>
        <location evidence="2">Nucleus</location>
    </subcellularLocation>
    <text evidence="3">Upon ER stress, translocated into the nucleus.</text>
</comment>
<comment type="PTM">
    <text evidence="3">Upon ER stress, translocated to the Golgi apparatus, where it is processed by regulated intramembrane proteolysis (RIP) to release the cytosol-facing N-terminal transcription factor domain. The cleavage is performed sequentially by site-1 and site-2 proteases (S1P/MBTPS1 and S2P/MBTPS2).</text>
</comment>
<comment type="PTM">
    <text evidence="3">N-glycosylated.</text>
</comment>
<comment type="PTM">
    <text evidence="3">Ubiquitinated by HRD1/SYVN1; undergoes 'Lys-48'-linked ubiquitination, followed by rapid proteasomal degradation under normal conditions. Upon ER stress, SYVN1 E3 ubiquitin-protein ligase dissociates from its substrate, ubiquitination does not occur and CREB3L2 is stabilized.</text>
</comment>
<comment type="similarity">
    <text evidence="7">Belongs to the bZIP family. ATF subfamily.</text>
</comment>
<accession>Q5RCM9</accession>
<reference key="1">
    <citation type="submission" date="2004-11" db="EMBL/GenBank/DDBJ databases">
        <authorList>
            <consortium name="The German cDNA consortium"/>
        </authorList>
    </citation>
    <scope>NUCLEOTIDE SEQUENCE [LARGE SCALE MRNA]</scope>
    <source>
        <tissue>Kidney</tissue>
    </source>
</reference>
<proteinExistence type="evidence at transcript level"/>
<gene>
    <name type="primary">CREB3L2</name>
</gene>
<evidence type="ECO:0000250" key="1"/>
<evidence type="ECO:0000250" key="2">
    <source>
        <dbReference type="UniProtKB" id="Q70SY1"/>
    </source>
</evidence>
<evidence type="ECO:0000250" key="3">
    <source>
        <dbReference type="UniProtKB" id="Q8BH52"/>
    </source>
</evidence>
<evidence type="ECO:0000255" key="4"/>
<evidence type="ECO:0000255" key="5">
    <source>
        <dbReference type="PROSITE-ProRule" id="PRU00978"/>
    </source>
</evidence>
<evidence type="ECO:0000256" key="6">
    <source>
        <dbReference type="SAM" id="MobiDB-lite"/>
    </source>
</evidence>
<evidence type="ECO:0000305" key="7"/>
<keyword id="KW-0010">Activator</keyword>
<keyword id="KW-0217">Developmental protein</keyword>
<keyword id="KW-0238">DNA-binding</keyword>
<keyword id="KW-0256">Endoplasmic reticulum</keyword>
<keyword id="KW-0325">Glycoprotein</keyword>
<keyword id="KW-1017">Isopeptide bond</keyword>
<keyword id="KW-0472">Membrane</keyword>
<keyword id="KW-0539">Nucleus</keyword>
<keyword id="KW-0597">Phosphoprotein</keyword>
<keyword id="KW-1185">Reference proteome</keyword>
<keyword id="KW-0735">Signal-anchor</keyword>
<keyword id="KW-0804">Transcription</keyword>
<keyword id="KW-0805">Transcription regulation</keyword>
<keyword id="KW-0812">Transmembrane</keyword>
<keyword id="KW-1133">Transmembrane helix</keyword>
<keyword id="KW-0832">Ubl conjugation</keyword>
<keyword id="KW-0834">Unfolded protein response</keyword>
<sequence length="520" mass="57501">MEVLESGEQGVLQWDRKLSELSEPGDGEALMYHTHFSELLDEFSQNVLGQLLNDPFLSEKSVSTEVEPSPMSPAPLIQAEHSYSLCEEPRAQSPFTHITTSDSFNDDEVESEKWYLSTDFPSTTIKTEPITDEPPPGLVPSVTLTITAISTPFEKEEPPLEMNTGVDSSCQTIIPKIKLEPHEVDQFLNFSPKEAPVDHLHLPPTPPSSHGSDSEGSLSPNPRLHPFSLPQTHSPSRAAPRAPSALSSSPLLTAPHKLQGSGPLVLTEEEKRTLIAEGYPIPTKLPLTKSEEKALKKIRRKIKNKISAQESRRKKKEYMDSLEKKVESCSTENLELRKKVEVLENTNRTLLQQLQKLQTLVMGKVSRTCKLAGTQTGTCLMVVVLCFAVAFGSFFQGYGPYPSATKMALPSQHSLQEPYTASVVRSRNLLIYEEHSPPEEPSSPGSAGELGGWDRGSSLLRVSGLESRPDVDLPHFIISNETSLEKSVLLELQQHLVSAKLEGNETLKVVELDRRVNTTF</sequence>
<name>CR3L2_PONAB</name>
<protein>
    <recommendedName>
        <fullName>Cyclic AMP-responsive element-binding protein 3-like protein 2</fullName>
        <shortName>cAMP-responsive element-binding protein 3-like protein 2</shortName>
    </recommendedName>
    <component>
        <recommendedName>
            <fullName>Processed cyclic AMP-responsive element-binding protein 3-like protein 2</fullName>
        </recommendedName>
    </component>
</protein>